<accession>Q86JF8</accession>
<accession>Q55AT9</accession>
<reference key="1">
    <citation type="journal article" date="2002" name="Nature">
        <title>Sequence and analysis of chromosome 2 of Dictyostelium discoideum.</title>
        <authorList>
            <person name="Gloeckner G."/>
            <person name="Eichinger L."/>
            <person name="Szafranski K."/>
            <person name="Pachebat J.A."/>
            <person name="Bankier A.T."/>
            <person name="Dear P.H."/>
            <person name="Lehmann R."/>
            <person name="Baumgart C."/>
            <person name="Parra G."/>
            <person name="Abril J.F."/>
            <person name="Guigo R."/>
            <person name="Kumpf K."/>
            <person name="Tunggal B."/>
            <person name="Cox E.C."/>
            <person name="Quail M.A."/>
            <person name="Platzer M."/>
            <person name="Rosenthal A."/>
            <person name="Noegel A.A."/>
        </authorList>
    </citation>
    <scope>NUCLEOTIDE SEQUENCE [LARGE SCALE GENOMIC DNA]</scope>
    <source>
        <strain>AX4</strain>
    </source>
</reference>
<reference key="2">
    <citation type="journal article" date="2005" name="Nature">
        <title>The genome of the social amoeba Dictyostelium discoideum.</title>
        <authorList>
            <person name="Eichinger L."/>
            <person name="Pachebat J.A."/>
            <person name="Gloeckner G."/>
            <person name="Rajandream M.A."/>
            <person name="Sucgang R."/>
            <person name="Berriman M."/>
            <person name="Song J."/>
            <person name="Olsen R."/>
            <person name="Szafranski K."/>
            <person name="Xu Q."/>
            <person name="Tunggal B."/>
            <person name="Kummerfeld S."/>
            <person name="Madera M."/>
            <person name="Konfortov B.A."/>
            <person name="Rivero F."/>
            <person name="Bankier A.T."/>
            <person name="Lehmann R."/>
            <person name="Hamlin N."/>
            <person name="Davies R."/>
            <person name="Gaudet P."/>
            <person name="Fey P."/>
            <person name="Pilcher K."/>
            <person name="Chen G."/>
            <person name="Saunders D."/>
            <person name="Sodergren E.J."/>
            <person name="Davis P."/>
            <person name="Kerhornou A."/>
            <person name="Nie X."/>
            <person name="Hall N."/>
            <person name="Anjard C."/>
            <person name="Hemphill L."/>
            <person name="Bason N."/>
            <person name="Farbrother P."/>
            <person name="Desany B."/>
            <person name="Just E."/>
            <person name="Morio T."/>
            <person name="Rost R."/>
            <person name="Churcher C.M."/>
            <person name="Cooper J."/>
            <person name="Haydock S."/>
            <person name="van Driessche N."/>
            <person name="Cronin A."/>
            <person name="Goodhead I."/>
            <person name="Muzny D.M."/>
            <person name="Mourier T."/>
            <person name="Pain A."/>
            <person name="Lu M."/>
            <person name="Harper D."/>
            <person name="Lindsay R."/>
            <person name="Hauser H."/>
            <person name="James K.D."/>
            <person name="Quiles M."/>
            <person name="Madan Babu M."/>
            <person name="Saito T."/>
            <person name="Buchrieser C."/>
            <person name="Wardroper A."/>
            <person name="Felder M."/>
            <person name="Thangavelu M."/>
            <person name="Johnson D."/>
            <person name="Knights A."/>
            <person name="Loulseged H."/>
            <person name="Mungall K.L."/>
            <person name="Oliver K."/>
            <person name="Price C."/>
            <person name="Quail M.A."/>
            <person name="Urushihara H."/>
            <person name="Hernandez J."/>
            <person name="Rabbinowitsch E."/>
            <person name="Steffen D."/>
            <person name="Sanders M."/>
            <person name="Ma J."/>
            <person name="Kohara Y."/>
            <person name="Sharp S."/>
            <person name="Simmonds M.N."/>
            <person name="Spiegler S."/>
            <person name="Tivey A."/>
            <person name="Sugano S."/>
            <person name="White B."/>
            <person name="Walker D."/>
            <person name="Woodward J.R."/>
            <person name="Winckler T."/>
            <person name="Tanaka Y."/>
            <person name="Shaulsky G."/>
            <person name="Schleicher M."/>
            <person name="Weinstock G.M."/>
            <person name="Rosenthal A."/>
            <person name="Cox E.C."/>
            <person name="Chisholm R.L."/>
            <person name="Gibbs R.A."/>
            <person name="Loomis W.F."/>
            <person name="Platzer M."/>
            <person name="Kay R.R."/>
            <person name="Williams J.G."/>
            <person name="Dear P.H."/>
            <person name="Noegel A.A."/>
            <person name="Barrell B.G."/>
            <person name="Kuspa A."/>
        </authorList>
    </citation>
    <scope>NUCLEOTIDE SEQUENCE [LARGE SCALE GENOMIC DNA]</scope>
    <source>
        <strain>AX4</strain>
    </source>
</reference>
<dbReference type="EMBL" id="AAFI02000006">
    <property type="protein sequence ID" value="EAL71643.1"/>
    <property type="molecule type" value="Genomic_DNA"/>
</dbReference>
<dbReference type="RefSeq" id="XP_645607.1">
    <property type="nucleotide sequence ID" value="XM_640515.1"/>
</dbReference>
<dbReference type="SMR" id="Q86JF8"/>
<dbReference type="PaxDb" id="44689-DDB0168423"/>
<dbReference type="EnsemblProtists" id="EAL71643">
    <property type="protein sequence ID" value="EAL71643"/>
    <property type="gene ID" value="DDB_G0271558"/>
</dbReference>
<dbReference type="GeneID" id="8618062"/>
<dbReference type="KEGG" id="ddi:DDB_G0271558"/>
<dbReference type="dictyBase" id="DDB_G0271558"/>
<dbReference type="HOGENOM" id="CLU_2175796_0_0_1"/>
<dbReference type="InParanoid" id="Q86JF8"/>
<dbReference type="PRO" id="PR:Q86JF8"/>
<dbReference type="Proteomes" id="UP000002195">
    <property type="component" value="Chromosome 2"/>
</dbReference>
<proteinExistence type="predicted"/>
<feature type="chain" id="PRO_0000348158" description="Putative uncharacterized protein DDB_G0271558">
    <location>
        <begin position="1"/>
        <end position="110"/>
    </location>
</feature>
<feature type="region of interest" description="Disordered" evidence="1">
    <location>
        <begin position="1"/>
        <end position="29"/>
    </location>
</feature>
<feature type="region of interest" description="Disordered" evidence="1">
    <location>
        <begin position="73"/>
        <end position="100"/>
    </location>
</feature>
<feature type="compositionally biased region" description="Basic and acidic residues" evidence="1">
    <location>
        <begin position="1"/>
        <end position="16"/>
    </location>
</feature>
<feature type="compositionally biased region" description="Low complexity" evidence="1">
    <location>
        <begin position="20"/>
        <end position="29"/>
    </location>
</feature>
<name>Y8423_DICDI</name>
<evidence type="ECO:0000256" key="1">
    <source>
        <dbReference type="SAM" id="MobiDB-lite"/>
    </source>
</evidence>
<organism>
    <name type="scientific">Dictyostelium discoideum</name>
    <name type="common">Social amoeba</name>
    <dbReference type="NCBI Taxonomy" id="44689"/>
    <lineage>
        <taxon>Eukaryota</taxon>
        <taxon>Amoebozoa</taxon>
        <taxon>Evosea</taxon>
        <taxon>Eumycetozoa</taxon>
        <taxon>Dictyostelia</taxon>
        <taxon>Dictyosteliales</taxon>
        <taxon>Dictyosteliaceae</taxon>
        <taxon>Dictyostelium</taxon>
    </lineage>
</organism>
<protein>
    <recommendedName>
        <fullName>Putative uncharacterized protein DDB_G0271558</fullName>
    </recommendedName>
</protein>
<gene>
    <name type="ORF">DDB_G0271558</name>
</gene>
<sequence>MSVKLKYDKIDQRNGDDSGGNHNNCGNGNNVTIVIKIQPQQQQQLINERQQQHQQQQQLINERQLLQQQIQLIKQQPQQQQPMNHTTPPSPHHLRFESPNDVPYIVIKAV</sequence>
<keyword id="KW-1185">Reference proteome</keyword>